<feature type="chain" id="PRO_1000053713" description="Uracil phosphoribosyltransferase">
    <location>
        <begin position="1"/>
        <end position="208"/>
    </location>
</feature>
<feature type="binding site" evidence="1">
    <location>
        <position position="78"/>
    </location>
    <ligand>
        <name>5-phospho-alpha-D-ribose 1-diphosphate</name>
        <dbReference type="ChEBI" id="CHEBI:58017"/>
    </ligand>
</feature>
<feature type="binding site" evidence="1">
    <location>
        <position position="103"/>
    </location>
    <ligand>
        <name>5-phospho-alpha-D-ribose 1-diphosphate</name>
        <dbReference type="ChEBI" id="CHEBI:58017"/>
    </ligand>
</feature>
<feature type="binding site" evidence="1">
    <location>
        <begin position="130"/>
        <end position="138"/>
    </location>
    <ligand>
        <name>5-phospho-alpha-D-ribose 1-diphosphate</name>
        <dbReference type="ChEBI" id="CHEBI:58017"/>
    </ligand>
</feature>
<feature type="binding site" evidence="1">
    <location>
        <position position="193"/>
    </location>
    <ligand>
        <name>uracil</name>
        <dbReference type="ChEBI" id="CHEBI:17568"/>
    </ligand>
</feature>
<feature type="binding site" evidence="1">
    <location>
        <begin position="198"/>
        <end position="200"/>
    </location>
    <ligand>
        <name>uracil</name>
        <dbReference type="ChEBI" id="CHEBI:17568"/>
    </ligand>
</feature>
<feature type="binding site" evidence="1">
    <location>
        <position position="199"/>
    </location>
    <ligand>
        <name>5-phospho-alpha-D-ribose 1-diphosphate</name>
        <dbReference type="ChEBI" id="CHEBI:58017"/>
    </ligand>
</feature>
<proteinExistence type="inferred from homology"/>
<protein>
    <recommendedName>
        <fullName evidence="1">Uracil phosphoribosyltransferase</fullName>
        <ecNumber evidence="1">2.4.2.9</ecNumber>
    </recommendedName>
    <alternativeName>
        <fullName evidence="1">UMP pyrophosphorylase</fullName>
    </alternativeName>
    <alternativeName>
        <fullName evidence="1">UPRTase</fullName>
    </alternativeName>
</protein>
<gene>
    <name evidence="1" type="primary">upp</name>
    <name type="ordered locus">Dde_1448</name>
</gene>
<sequence>MAVYAVDHPLVKHKLGRLRQSDVPVAEFRALSNEVCRLLTYEATKDLETEKTQVEGWAGPVEVEQIKGKKITVVPILRAGLGMLDGLLDMIPGAKVSVVGMFRNEETLEPVTYYTKLANNIEERQAIIIDPMLATGGTLVATIDLLKKAGCKQIRGLFLVAAPEGIKRVQDAHPDVDIYVAAVDDCLNENGYILPGLGDAGDKIFGTK</sequence>
<evidence type="ECO:0000255" key="1">
    <source>
        <dbReference type="HAMAP-Rule" id="MF_01218"/>
    </source>
</evidence>
<keyword id="KW-0021">Allosteric enzyme</keyword>
<keyword id="KW-0328">Glycosyltransferase</keyword>
<keyword id="KW-0342">GTP-binding</keyword>
<keyword id="KW-0460">Magnesium</keyword>
<keyword id="KW-0547">Nucleotide-binding</keyword>
<keyword id="KW-1185">Reference proteome</keyword>
<keyword id="KW-0808">Transferase</keyword>
<reference key="1">
    <citation type="journal article" date="2011" name="J. Bacteriol.">
        <title>Complete genome sequence and updated annotation of Desulfovibrio alaskensis G20.</title>
        <authorList>
            <person name="Hauser L.J."/>
            <person name="Land M.L."/>
            <person name="Brown S.D."/>
            <person name="Larimer F."/>
            <person name="Keller K.L."/>
            <person name="Rapp-Giles B.J."/>
            <person name="Price M.N."/>
            <person name="Lin M."/>
            <person name="Bruce D.C."/>
            <person name="Detter J.C."/>
            <person name="Tapia R."/>
            <person name="Han C.S."/>
            <person name="Goodwin L.A."/>
            <person name="Cheng J.F."/>
            <person name="Pitluck S."/>
            <person name="Copeland A."/>
            <person name="Lucas S."/>
            <person name="Nolan M."/>
            <person name="Lapidus A.L."/>
            <person name="Palumbo A.V."/>
            <person name="Wall J.D."/>
        </authorList>
    </citation>
    <scope>NUCLEOTIDE SEQUENCE [LARGE SCALE GENOMIC DNA]</scope>
    <source>
        <strain>ATCC BAA-1058 / DSM 17464 / G20</strain>
    </source>
</reference>
<organism>
    <name type="scientific">Oleidesulfovibrio alaskensis (strain ATCC BAA-1058 / DSM 17464 / G20)</name>
    <name type="common">Desulfovibrio alaskensis</name>
    <dbReference type="NCBI Taxonomy" id="207559"/>
    <lineage>
        <taxon>Bacteria</taxon>
        <taxon>Pseudomonadati</taxon>
        <taxon>Thermodesulfobacteriota</taxon>
        <taxon>Desulfovibrionia</taxon>
        <taxon>Desulfovibrionales</taxon>
        <taxon>Desulfovibrionaceae</taxon>
        <taxon>Oleidesulfovibrio</taxon>
    </lineage>
</organism>
<comment type="function">
    <text evidence="1">Catalyzes the conversion of uracil and 5-phospho-alpha-D-ribose 1-diphosphate (PRPP) to UMP and diphosphate.</text>
</comment>
<comment type="catalytic activity">
    <reaction evidence="1">
        <text>UMP + diphosphate = 5-phospho-alpha-D-ribose 1-diphosphate + uracil</text>
        <dbReference type="Rhea" id="RHEA:13017"/>
        <dbReference type="ChEBI" id="CHEBI:17568"/>
        <dbReference type="ChEBI" id="CHEBI:33019"/>
        <dbReference type="ChEBI" id="CHEBI:57865"/>
        <dbReference type="ChEBI" id="CHEBI:58017"/>
        <dbReference type="EC" id="2.4.2.9"/>
    </reaction>
</comment>
<comment type="cofactor">
    <cofactor evidence="1">
        <name>Mg(2+)</name>
        <dbReference type="ChEBI" id="CHEBI:18420"/>
    </cofactor>
    <text evidence="1">Binds 1 Mg(2+) ion per subunit. The magnesium is bound as Mg-PRPP.</text>
</comment>
<comment type="activity regulation">
    <text evidence="1">Allosterically activated by GTP.</text>
</comment>
<comment type="pathway">
    <text evidence="1">Pyrimidine metabolism; UMP biosynthesis via salvage pathway; UMP from uracil: step 1/1.</text>
</comment>
<comment type="similarity">
    <text evidence="1">Belongs to the UPRTase family.</text>
</comment>
<name>UPP_OLEA2</name>
<accession>Q311Z9</accession>
<dbReference type="EC" id="2.4.2.9" evidence="1"/>
<dbReference type="EMBL" id="CP000112">
    <property type="protein sequence ID" value="ABB38247.1"/>
    <property type="molecule type" value="Genomic_DNA"/>
</dbReference>
<dbReference type="RefSeq" id="WP_011367416.1">
    <property type="nucleotide sequence ID" value="NC_007519.1"/>
</dbReference>
<dbReference type="SMR" id="Q311Z9"/>
<dbReference type="STRING" id="207559.Dde_1448"/>
<dbReference type="KEGG" id="dde:Dde_1448"/>
<dbReference type="eggNOG" id="COG0035">
    <property type="taxonomic scope" value="Bacteria"/>
</dbReference>
<dbReference type="HOGENOM" id="CLU_067096_2_2_7"/>
<dbReference type="UniPathway" id="UPA00574">
    <property type="reaction ID" value="UER00636"/>
</dbReference>
<dbReference type="Proteomes" id="UP000002710">
    <property type="component" value="Chromosome"/>
</dbReference>
<dbReference type="GO" id="GO:0005525">
    <property type="term" value="F:GTP binding"/>
    <property type="evidence" value="ECO:0007669"/>
    <property type="project" value="UniProtKB-KW"/>
</dbReference>
<dbReference type="GO" id="GO:0000287">
    <property type="term" value="F:magnesium ion binding"/>
    <property type="evidence" value="ECO:0007669"/>
    <property type="project" value="UniProtKB-UniRule"/>
</dbReference>
<dbReference type="GO" id="GO:0004845">
    <property type="term" value="F:uracil phosphoribosyltransferase activity"/>
    <property type="evidence" value="ECO:0007669"/>
    <property type="project" value="UniProtKB-UniRule"/>
</dbReference>
<dbReference type="GO" id="GO:0044206">
    <property type="term" value="P:UMP salvage"/>
    <property type="evidence" value="ECO:0007669"/>
    <property type="project" value="UniProtKB-UniRule"/>
</dbReference>
<dbReference type="GO" id="GO:0006223">
    <property type="term" value="P:uracil salvage"/>
    <property type="evidence" value="ECO:0007669"/>
    <property type="project" value="InterPro"/>
</dbReference>
<dbReference type="CDD" id="cd06223">
    <property type="entry name" value="PRTases_typeI"/>
    <property type="match status" value="1"/>
</dbReference>
<dbReference type="FunFam" id="3.40.50.2020:FF:000003">
    <property type="entry name" value="Uracil phosphoribosyltransferase"/>
    <property type="match status" value="1"/>
</dbReference>
<dbReference type="Gene3D" id="3.40.50.2020">
    <property type="match status" value="1"/>
</dbReference>
<dbReference type="HAMAP" id="MF_01218_B">
    <property type="entry name" value="Upp_B"/>
    <property type="match status" value="1"/>
</dbReference>
<dbReference type="InterPro" id="IPR000836">
    <property type="entry name" value="PRibTrfase_dom"/>
</dbReference>
<dbReference type="InterPro" id="IPR029057">
    <property type="entry name" value="PRTase-like"/>
</dbReference>
<dbReference type="InterPro" id="IPR034332">
    <property type="entry name" value="Upp_B"/>
</dbReference>
<dbReference type="InterPro" id="IPR050054">
    <property type="entry name" value="UPRTase/APRTase"/>
</dbReference>
<dbReference type="InterPro" id="IPR005765">
    <property type="entry name" value="Ura_phspho_trans"/>
</dbReference>
<dbReference type="NCBIfam" id="NF001097">
    <property type="entry name" value="PRK00129.1"/>
    <property type="match status" value="1"/>
</dbReference>
<dbReference type="NCBIfam" id="TIGR01091">
    <property type="entry name" value="upp"/>
    <property type="match status" value="1"/>
</dbReference>
<dbReference type="PANTHER" id="PTHR32315">
    <property type="entry name" value="ADENINE PHOSPHORIBOSYLTRANSFERASE"/>
    <property type="match status" value="1"/>
</dbReference>
<dbReference type="PANTHER" id="PTHR32315:SF4">
    <property type="entry name" value="URACIL PHOSPHORIBOSYLTRANSFERASE, CHLOROPLASTIC"/>
    <property type="match status" value="1"/>
</dbReference>
<dbReference type="Pfam" id="PF14681">
    <property type="entry name" value="UPRTase"/>
    <property type="match status" value="1"/>
</dbReference>
<dbReference type="SUPFAM" id="SSF53271">
    <property type="entry name" value="PRTase-like"/>
    <property type="match status" value="1"/>
</dbReference>